<gene>
    <name evidence="1" type="primary">gmk</name>
    <name type="ordered locus">Jann_2440</name>
</gene>
<proteinExistence type="inferred from homology"/>
<reference key="1">
    <citation type="submission" date="2006-02" db="EMBL/GenBank/DDBJ databases">
        <title>Complete sequence of chromosome of Jannaschia sp. CCS1.</title>
        <authorList>
            <consortium name="US DOE Joint Genome Institute"/>
            <person name="Copeland A."/>
            <person name="Lucas S."/>
            <person name="Lapidus A."/>
            <person name="Barry K."/>
            <person name="Detter J.C."/>
            <person name="Glavina del Rio T."/>
            <person name="Hammon N."/>
            <person name="Israni S."/>
            <person name="Pitluck S."/>
            <person name="Brettin T."/>
            <person name="Bruce D."/>
            <person name="Han C."/>
            <person name="Tapia R."/>
            <person name="Gilna P."/>
            <person name="Chertkov O."/>
            <person name="Saunders E."/>
            <person name="Schmutz J."/>
            <person name="Larimer F."/>
            <person name="Land M."/>
            <person name="Kyrpides N."/>
            <person name="Lykidis A."/>
            <person name="Moran M.A."/>
            <person name="Belas R."/>
            <person name="Ye W."/>
            <person name="Buchan A."/>
            <person name="Gonzalez J.M."/>
            <person name="Schell M.A."/>
            <person name="Richardson P."/>
        </authorList>
    </citation>
    <scope>NUCLEOTIDE SEQUENCE [LARGE SCALE GENOMIC DNA]</scope>
    <source>
        <strain>CCS1</strain>
    </source>
</reference>
<dbReference type="EC" id="2.7.4.8" evidence="1"/>
<dbReference type="EMBL" id="CP000264">
    <property type="protein sequence ID" value="ABD55357.1"/>
    <property type="molecule type" value="Genomic_DNA"/>
</dbReference>
<dbReference type="RefSeq" id="WP_011455561.1">
    <property type="nucleotide sequence ID" value="NC_007802.1"/>
</dbReference>
<dbReference type="SMR" id="Q28PK5"/>
<dbReference type="STRING" id="290400.Jann_2440"/>
<dbReference type="DNASU" id="3934897"/>
<dbReference type="KEGG" id="jan:Jann_2440"/>
<dbReference type="eggNOG" id="COG0194">
    <property type="taxonomic scope" value="Bacteria"/>
</dbReference>
<dbReference type="HOGENOM" id="CLU_001715_1_0_5"/>
<dbReference type="Proteomes" id="UP000008326">
    <property type="component" value="Chromosome"/>
</dbReference>
<dbReference type="GO" id="GO:0005829">
    <property type="term" value="C:cytosol"/>
    <property type="evidence" value="ECO:0007669"/>
    <property type="project" value="TreeGrafter"/>
</dbReference>
<dbReference type="GO" id="GO:0005524">
    <property type="term" value="F:ATP binding"/>
    <property type="evidence" value="ECO:0007669"/>
    <property type="project" value="UniProtKB-UniRule"/>
</dbReference>
<dbReference type="GO" id="GO:0004385">
    <property type="term" value="F:guanylate kinase activity"/>
    <property type="evidence" value="ECO:0007669"/>
    <property type="project" value="UniProtKB-UniRule"/>
</dbReference>
<dbReference type="CDD" id="cd00071">
    <property type="entry name" value="GMPK"/>
    <property type="match status" value="1"/>
</dbReference>
<dbReference type="FunFam" id="3.30.63.10:FF:000002">
    <property type="entry name" value="Guanylate kinase 1"/>
    <property type="match status" value="1"/>
</dbReference>
<dbReference type="Gene3D" id="3.30.63.10">
    <property type="entry name" value="Guanylate Kinase phosphate binding domain"/>
    <property type="match status" value="1"/>
</dbReference>
<dbReference type="Gene3D" id="3.40.50.300">
    <property type="entry name" value="P-loop containing nucleotide triphosphate hydrolases"/>
    <property type="match status" value="1"/>
</dbReference>
<dbReference type="HAMAP" id="MF_00328">
    <property type="entry name" value="Guanylate_kinase"/>
    <property type="match status" value="1"/>
</dbReference>
<dbReference type="InterPro" id="IPR008145">
    <property type="entry name" value="GK/Ca_channel_bsu"/>
</dbReference>
<dbReference type="InterPro" id="IPR008144">
    <property type="entry name" value="Guanylate_kin-like_dom"/>
</dbReference>
<dbReference type="InterPro" id="IPR017665">
    <property type="entry name" value="Guanylate_kinase"/>
</dbReference>
<dbReference type="InterPro" id="IPR020590">
    <property type="entry name" value="Guanylate_kinase_CS"/>
</dbReference>
<dbReference type="InterPro" id="IPR027417">
    <property type="entry name" value="P-loop_NTPase"/>
</dbReference>
<dbReference type="NCBIfam" id="TIGR03263">
    <property type="entry name" value="guanyl_kin"/>
    <property type="match status" value="1"/>
</dbReference>
<dbReference type="PANTHER" id="PTHR23117:SF13">
    <property type="entry name" value="GUANYLATE KINASE"/>
    <property type="match status" value="1"/>
</dbReference>
<dbReference type="PANTHER" id="PTHR23117">
    <property type="entry name" value="GUANYLATE KINASE-RELATED"/>
    <property type="match status" value="1"/>
</dbReference>
<dbReference type="Pfam" id="PF00625">
    <property type="entry name" value="Guanylate_kin"/>
    <property type="match status" value="1"/>
</dbReference>
<dbReference type="SMART" id="SM00072">
    <property type="entry name" value="GuKc"/>
    <property type="match status" value="1"/>
</dbReference>
<dbReference type="SUPFAM" id="SSF52540">
    <property type="entry name" value="P-loop containing nucleoside triphosphate hydrolases"/>
    <property type="match status" value="1"/>
</dbReference>
<dbReference type="PROSITE" id="PS00856">
    <property type="entry name" value="GUANYLATE_KINASE_1"/>
    <property type="match status" value="1"/>
</dbReference>
<dbReference type="PROSITE" id="PS50052">
    <property type="entry name" value="GUANYLATE_KINASE_2"/>
    <property type="match status" value="1"/>
</dbReference>
<comment type="function">
    <text evidence="1">Essential for recycling GMP and indirectly, cGMP.</text>
</comment>
<comment type="catalytic activity">
    <reaction evidence="1">
        <text>GMP + ATP = GDP + ADP</text>
        <dbReference type="Rhea" id="RHEA:20780"/>
        <dbReference type="ChEBI" id="CHEBI:30616"/>
        <dbReference type="ChEBI" id="CHEBI:58115"/>
        <dbReference type="ChEBI" id="CHEBI:58189"/>
        <dbReference type="ChEBI" id="CHEBI:456216"/>
        <dbReference type="EC" id="2.7.4.8"/>
    </reaction>
</comment>
<comment type="subcellular location">
    <subcellularLocation>
        <location evidence="1">Cytoplasm</location>
    </subcellularLocation>
</comment>
<comment type="similarity">
    <text evidence="1">Belongs to the guanylate kinase family.</text>
</comment>
<evidence type="ECO:0000255" key="1">
    <source>
        <dbReference type="HAMAP-Rule" id="MF_00328"/>
    </source>
</evidence>
<keyword id="KW-0067">ATP-binding</keyword>
<keyword id="KW-0963">Cytoplasm</keyword>
<keyword id="KW-0418">Kinase</keyword>
<keyword id="KW-0547">Nucleotide-binding</keyword>
<keyword id="KW-1185">Reference proteome</keyword>
<keyword id="KW-0808">Transferase</keyword>
<feature type="chain" id="PRO_0000266337" description="Guanylate kinase">
    <location>
        <begin position="1"/>
        <end position="218"/>
    </location>
</feature>
<feature type="domain" description="Guanylate kinase-like" evidence="1">
    <location>
        <begin position="10"/>
        <end position="190"/>
    </location>
</feature>
<feature type="binding site" evidence="1">
    <location>
        <begin position="17"/>
        <end position="24"/>
    </location>
    <ligand>
        <name>ATP</name>
        <dbReference type="ChEBI" id="CHEBI:30616"/>
    </ligand>
</feature>
<accession>Q28PK5</accession>
<sequence>MTMSDLRRRGLLIILSSPSGAGKSTLARRLMAWDETLSFSVSATTRQARPGEEDGVHYRFLPEAEFKSLVSSGQMLEHAHVFGNFYGSPMAPVSQAIEAGHDVLFDIDWQGAQQIRNSDLGKHTLSIFILPPSIPELKRRLESRAQDSDDVIEKRMRKSWDEISRWDAYDYVLVNDDLSVTEERLKTIITAERLRREQQPALQTHVRALQTEFEDLEQ</sequence>
<organism>
    <name type="scientific">Jannaschia sp. (strain CCS1)</name>
    <dbReference type="NCBI Taxonomy" id="290400"/>
    <lineage>
        <taxon>Bacteria</taxon>
        <taxon>Pseudomonadati</taxon>
        <taxon>Pseudomonadota</taxon>
        <taxon>Alphaproteobacteria</taxon>
        <taxon>Rhodobacterales</taxon>
        <taxon>Roseobacteraceae</taxon>
        <taxon>Jannaschia</taxon>
    </lineage>
</organism>
<name>KGUA_JANSC</name>
<protein>
    <recommendedName>
        <fullName evidence="1">Guanylate kinase</fullName>
        <ecNumber evidence="1">2.7.4.8</ecNumber>
    </recommendedName>
    <alternativeName>
        <fullName evidence="1">GMP kinase</fullName>
    </alternativeName>
</protein>